<comment type="function">
    <text evidence="1">Cilium- and flagellum-specific protein that plays a role in axonemal structure organization and motility. May play a role in outer and inner dynein arm assembly.</text>
</comment>
<comment type="subunit">
    <text evidence="2">Interacts with DNAAF2.</text>
</comment>
<comment type="subcellular location">
    <subcellularLocation>
        <location evidence="1">Cytoplasm</location>
    </subcellularLocation>
    <subcellularLocation>
        <location evidence="1">Cytoplasm</location>
        <location evidence="1">Cytoskeleton</location>
        <location evidence="1">Cilium axoneme</location>
    </subcellularLocation>
</comment>
<comment type="similarity">
    <text evidence="3">Belongs to the CFAP300 family.</text>
</comment>
<sequence>MAAGEPGDLGVYSFRFLPQKTFQSLSTPQTTSRLRQWSMLGRIEAQAFGFDQTFQAYRKDDFVTAFFKDPNVIPNLKLLSESSGEWLTLGTEVKKIEAINVPCTQLSMSFFNRLYDEAIVRDNGYIVKCLDSFCDPFLISDELRKVLLVEDSEKYEVFSQPEREEFLFCLFKHLCLGGALCQYEDVINPYLETTKLIYKDLVSVRKNPQTKKIQITSSIFKVTAYDSVGVCYPSTKSHEQTFSYFIVDPIKRHVHVLYHCYGMGEVS</sequence>
<protein>
    <recommendedName>
        <fullName evidence="3">Cilia- and flagella-associated protein 300</fullName>
    </recommendedName>
</protein>
<keyword id="KW-0966">Cell projection</keyword>
<keyword id="KW-0963">Cytoplasm</keyword>
<keyword id="KW-0206">Cytoskeleton</keyword>
<keyword id="KW-1185">Reference proteome</keyword>
<reference key="1">
    <citation type="submission" date="2005-09" db="EMBL/GenBank/DDBJ databases">
        <authorList>
            <consortium name="NIH - Mammalian Gene Collection (MGC) project"/>
        </authorList>
    </citation>
    <scope>NUCLEOTIDE SEQUENCE [LARGE SCALE MRNA]</scope>
    <source>
        <strain>Crossbred X Angus</strain>
        <tissue>Liver</tissue>
    </source>
</reference>
<name>CF300_BOVIN</name>
<accession>Q2HJH8</accession>
<feature type="chain" id="PRO_0000274275" description="Cilia- and flagella-associated protein 300">
    <location>
        <begin position="1"/>
        <end position="267"/>
    </location>
</feature>
<gene>
    <name evidence="2" type="primary">CFAP300</name>
</gene>
<proteinExistence type="evidence at transcript level"/>
<organism>
    <name type="scientific">Bos taurus</name>
    <name type="common">Bovine</name>
    <dbReference type="NCBI Taxonomy" id="9913"/>
    <lineage>
        <taxon>Eukaryota</taxon>
        <taxon>Metazoa</taxon>
        <taxon>Chordata</taxon>
        <taxon>Craniata</taxon>
        <taxon>Vertebrata</taxon>
        <taxon>Euteleostomi</taxon>
        <taxon>Mammalia</taxon>
        <taxon>Eutheria</taxon>
        <taxon>Laurasiatheria</taxon>
        <taxon>Artiodactyla</taxon>
        <taxon>Ruminantia</taxon>
        <taxon>Pecora</taxon>
        <taxon>Bovidae</taxon>
        <taxon>Bovinae</taxon>
        <taxon>Bos</taxon>
    </lineage>
</organism>
<dbReference type="EMBL" id="BC105371">
    <property type="protein sequence ID" value="AAI05372.1"/>
    <property type="molecule type" value="mRNA"/>
</dbReference>
<dbReference type="RefSeq" id="NP_001040063.1">
    <property type="nucleotide sequence ID" value="NM_001046598.2"/>
</dbReference>
<dbReference type="FunCoup" id="Q2HJH8">
    <property type="interactions" value="285"/>
</dbReference>
<dbReference type="STRING" id="9913.ENSBTAP00000064255"/>
<dbReference type="PaxDb" id="9913-ENSBTAP00000020352"/>
<dbReference type="Ensembl" id="ENSBTAT00000020352.4">
    <property type="protein sequence ID" value="ENSBTAP00000020352.4"/>
    <property type="gene ID" value="ENSBTAG00000015309.5"/>
</dbReference>
<dbReference type="GeneID" id="617430"/>
<dbReference type="KEGG" id="bta:617430"/>
<dbReference type="CTD" id="85016"/>
<dbReference type="VEuPathDB" id="HostDB:ENSBTAG00000015309"/>
<dbReference type="eggNOG" id="ENOG502QUFH">
    <property type="taxonomic scope" value="Eukaryota"/>
</dbReference>
<dbReference type="GeneTree" id="ENSGT00510000047559"/>
<dbReference type="InParanoid" id="Q2HJH8"/>
<dbReference type="OMA" id="FYHCYGV"/>
<dbReference type="OrthoDB" id="10259249at2759"/>
<dbReference type="Proteomes" id="UP000009136">
    <property type="component" value="Chromosome 15"/>
</dbReference>
<dbReference type="Bgee" id="ENSBTAG00000015309">
    <property type="expression patterns" value="Expressed in oocyte and 96 other cell types or tissues"/>
</dbReference>
<dbReference type="GO" id="GO:0005737">
    <property type="term" value="C:cytoplasm"/>
    <property type="evidence" value="ECO:0000250"/>
    <property type="project" value="UniProtKB"/>
</dbReference>
<dbReference type="GO" id="GO:0005856">
    <property type="term" value="C:cytoskeleton"/>
    <property type="evidence" value="ECO:0007669"/>
    <property type="project" value="UniProtKB-KW"/>
</dbReference>
<dbReference type="GO" id="GO:0031514">
    <property type="term" value="C:motile cilium"/>
    <property type="evidence" value="ECO:0000250"/>
    <property type="project" value="UniProtKB"/>
</dbReference>
<dbReference type="InterPro" id="IPR029416">
    <property type="entry name" value="CFAP300"/>
</dbReference>
<dbReference type="PANTHER" id="PTHR31078">
    <property type="entry name" value="CILIA- AND FLAGELLA-ASSOCIATED PROTEIN 300"/>
    <property type="match status" value="1"/>
</dbReference>
<dbReference type="PANTHER" id="PTHR31078:SF1">
    <property type="entry name" value="CILIA- AND FLAGELLA-ASSOCIATED PROTEIN 300"/>
    <property type="match status" value="1"/>
</dbReference>
<dbReference type="Pfam" id="PF14926">
    <property type="entry name" value="CFAP300"/>
    <property type="match status" value="1"/>
</dbReference>
<evidence type="ECO:0000250" key="1">
    <source>
        <dbReference type="UniProtKB" id="A0CY51"/>
    </source>
</evidence>
<evidence type="ECO:0000250" key="2">
    <source>
        <dbReference type="UniProtKB" id="Q9BRQ4"/>
    </source>
</evidence>
<evidence type="ECO:0000305" key="3"/>